<reference key="1">
    <citation type="journal article" date="2008" name="Nat. Biotechnol.">
        <title>Genome sequencing and analysis of the filamentous fungus Penicillium chrysogenum.</title>
        <authorList>
            <person name="van den Berg M.A."/>
            <person name="Albang R."/>
            <person name="Albermann K."/>
            <person name="Badger J.H."/>
            <person name="Daran J.-M."/>
            <person name="Driessen A.J.M."/>
            <person name="Garcia-Estrada C."/>
            <person name="Fedorova N.D."/>
            <person name="Harris D.M."/>
            <person name="Heijne W.H.M."/>
            <person name="Joardar V.S."/>
            <person name="Kiel J.A.K.W."/>
            <person name="Kovalchuk A."/>
            <person name="Martin J.F."/>
            <person name="Nierman W.C."/>
            <person name="Nijland J.G."/>
            <person name="Pronk J.T."/>
            <person name="Roubos J.A."/>
            <person name="van der Klei I.J."/>
            <person name="van Peij N.N.M.E."/>
            <person name="Veenhuis M."/>
            <person name="von Doehren H."/>
            <person name="Wagner C."/>
            <person name="Wortman J.R."/>
            <person name="Bovenberg R.A.L."/>
        </authorList>
    </citation>
    <scope>NUCLEOTIDE SEQUENCE [LARGE SCALE GENOMIC DNA]</scope>
    <source>
        <strain>ATCC 28089 / DSM 1075 / NRRL 1951 / Wisconsin 54-1255</strain>
    </source>
</reference>
<sequence>MLSLVLTVFFVHVAIYLVNTIGASTIDSLLWLLYLKLPTPTSRTARKQQQLKRQVLEQKHEMNSTSSQDEFAKWAKARRRHDKSMEEYEALNKTLTAQKSSFDWTVKIARWLSTNGLKIFLQFWYSKTPVFPLPEAWFPYYVEWIVSFPRAPLGSVSIHVWSNVCATTIALTAEVMGALLVQIVGQKKEQRETAPVSAEGKKAQ</sequence>
<name>GET1_PENRW</name>
<feature type="chain" id="PRO_5000410179" description="Protein get1">
    <location>
        <begin position="1"/>
        <end position="204"/>
    </location>
</feature>
<feature type="topological domain" description="Lumenal" evidence="1">
    <location>
        <begin position="1"/>
        <end position="4"/>
    </location>
</feature>
<feature type="transmembrane region" description="Helical" evidence="1">
    <location>
        <begin position="5"/>
        <end position="24"/>
    </location>
</feature>
<feature type="topological domain" description="Cytoplasmic" evidence="1">
    <location>
        <begin position="25"/>
        <end position="110"/>
    </location>
</feature>
<feature type="transmembrane region" description="Helical" evidence="1">
    <location>
        <begin position="111"/>
        <end position="131"/>
    </location>
</feature>
<feature type="topological domain" description="Lumenal" evidence="1">
    <location>
        <begin position="132"/>
        <end position="155"/>
    </location>
</feature>
<feature type="transmembrane region" description="Helical" evidence="1">
    <location>
        <begin position="156"/>
        <end position="172"/>
    </location>
</feature>
<feature type="topological domain" description="Cytoplasmic" evidence="1">
    <location>
        <begin position="173"/>
        <end position="204"/>
    </location>
</feature>
<feature type="coiled-coil region" evidence="1">
    <location>
        <begin position="43"/>
        <end position="99"/>
    </location>
</feature>
<accession>B6HS10</accession>
<keyword id="KW-0175">Coiled coil</keyword>
<keyword id="KW-0256">Endoplasmic reticulum</keyword>
<keyword id="KW-0472">Membrane</keyword>
<keyword id="KW-1185">Reference proteome</keyword>
<keyword id="KW-0812">Transmembrane</keyword>
<keyword id="KW-1133">Transmembrane helix</keyword>
<keyword id="KW-0813">Transport</keyword>
<dbReference type="EMBL" id="AM920437">
    <property type="protein sequence ID" value="CAP98988.1"/>
    <property type="molecule type" value="Genomic_DNA"/>
</dbReference>
<dbReference type="RefSeq" id="XP_002565613.1">
    <property type="nucleotide sequence ID" value="XM_002565567.1"/>
</dbReference>
<dbReference type="SMR" id="B6HS10"/>
<dbReference type="STRING" id="500485.B6HS10"/>
<dbReference type="GeneID" id="8312185"/>
<dbReference type="KEGG" id="pcs:N7525_004691"/>
<dbReference type="VEuPathDB" id="FungiDB:PCH_Pc22g17000"/>
<dbReference type="eggNOG" id="KOG4253">
    <property type="taxonomic scope" value="Eukaryota"/>
</dbReference>
<dbReference type="HOGENOM" id="CLU_089418_1_0_1"/>
<dbReference type="OMA" id="AEWIISF"/>
<dbReference type="OrthoDB" id="69461at2759"/>
<dbReference type="BioCyc" id="PCHR:PC22G17000-MONOMER"/>
<dbReference type="Proteomes" id="UP000000724">
    <property type="component" value="Contig Pc00c22"/>
</dbReference>
<dbReference type="GO" id="GO:0005789">
    <property type="term" value="C:endoplasmic reticulum membrane"/>
    <property type="evidence" value="ECO:0007669"/>
    <property type="project" value="UniProtKB-SubCell"/>
</dbReference>
<dbReference type="GO" id="GO:0043529">
    <property type="term" value="C:GET complex"/>
    <property type="evidence" value="ECO:0007669"/>
    <property type="project" value="InterPro"/>
</dbReference>
<dbReference type="GO" id="GO:0043495">
    <property type="term" value="F:protein-membrane adaptor activity"/>
    <property type="evidence" value="ECO:0007669"/>
    <property type="project" value="TreeGrafter"/>
</dbReference>
<dbReference type="GO" id="GO:0071816">
    <property type="term" value="P:tail-anchored membrane protein insertion into ER membrane"/>
    <property type="evidence" value="ECO:0007669"/>
    <property type="project" value="InterPro"/>
</dbReference>
<dbReference type="FunFam" id="1.10.287.660:FF:000006">
    <property type="entry name" value="Protein GET1"/>
    <property type="match status" value="1"/>
</dbReference>
<dbReference type="Gene3D" id="1.10.287.660">
    <property type="entry name" value="Helix hairpin bin"/>
    <property type="match status" value="1"/>
</dbReference>
<dbReference type="HAMAP" id="MF_03113">
    <property type="entry name" value="Get1"/>
    <property type="match status" value="1"/>
</dbReference>
<dbReference type="InterPro" id="IPR028945">
    <property type="entry name" value="Get1"/>
</dbReference>
<dbReference type="InterPro" id="IPR027538">
    <property type="entry name" value="Get1_fungi"/>
</dbReference>
<dbReference type="InterPro" id="IPR029012">
    <property type="entry name" value="Helix_hairpin_bin_sf"/>
</dbReference>
<dbReference type="PANTHER" id="PTHR42650:SF1">
    <property type="entry name" value="GUIDED ENTRY OF TAIL-ANCHORED PROTEINS FACTOR 1"/>
    <property type="match status" value="1"/>
</dbReference>
<dbReference type="PANTHER" id="PTHR42650">
    <property type="entry name" value="TAIL-ANCHORED PROTEIN INSERTION RECEPTOR WRB"/>
    <property type="match status" value="1"/>
</dbReference>
<dbReference type="Pfam" id="PF04420">
    <property type="entry name" value="CHD5"/>
    <property type="match status" value="1"/>
</dbReference>
<protein>
    <recommendedName>
        <fullName evidence="1">Protein get1</fullName>
    </recommendedName>
    <alternativeName>
        <fullName evidence="1">Guided entry of tail-anchored proteins 1</fullName>
    </alternativeName>
</protein>
<gene>
    <name type="primary">get1</name>
    <name type="ORF">Pc22g17000</name>
</gene>
<comment type="function">
    <text evidence="1">Required for the post-translational delivery of tail-anchored (TA) proteins to the endoplasmic reticulum. Acts as a membrane receptor for soluble get3, which recognizes and selectively binds the transmembrane domain of TA proteins in the cytosol.</text>
</comment>
<comment type="subunit">
    <text evidence="1">Interacts with get3.</text>
</comment>
<comment type="subcellular location">
    <subcellularLocation>
        <location evidence="1">Endoplasmic reticulum membrane</location>
        <topology evidence="1">Multi-pass membrane protein</topology>
    </subcellularLocation>
</comment>
<comment type="similarity">
    <text evidence="1">Belongs to the WRB/GET1 family.</text>
</comment>
<evidence type="ECO:0000255" key="1">
    <source>
        <dbReference type="HAMAP-Rule" id="MF_03113"/>
    </source>
</evidence>
<organism>
    <name type="scientific">Penicillium rubens (strain ATCC 28089 / DSM 1075 / NRRL 1951 / Wisconsin 54-1255)</name>
    <name type="common">Penicillium chrysogenum</name>
    <dbReference type="NCBI Taxonomy" id="500485"/>
    <lineage>
        <taxon>Eukaryota</taxon>
        <taxon>Fungi</taxon>
        <taxon>Dikarya</taxon>
        <taxon>Ascomycota</taxon>
        <taxon>Pezizomycotina</taxon>
        <taxon>Eurotiomycetes</taxon>
        <taxon>Eurotiomycetidae</taxon>
        <taxon>Eurotiales</taxon>
        <taxon>Aspergillaceae</taxon>
        <taxon>Penicillium</taxon>
        <taxon>Penicillium chrysogenum species complex</taxon>
    </lineage>
</organism>
<proteinExistence type="inferred from homology"/>